<feature type="chain" id="PRO_1000061878" description="UPF0250 protein PSPA7_1111">
    <location>
        <begin position="1"/>
        <end position="93"/>
    </location>
</feature>
<name>Y1111_PSEP7</name>
<accession>A6V0B2</accession>
<evidence type="ECO:0000255" key="1">
    <source>
        <dbReference type="HAMAP-Rule" id="MF_00659"/>
    </source>
</evidence>
<proteinExistence type="inferred from homology"/>
<gene>
    <name type="ordered locus">PSPA7_1111</name>
</gene>
<organism>
    <name type="scientific">Pseudomonas paraeruginosa (strain DSM 24068 / PA7)</name>
    <name type="common">Pseudomonas aeruginosa (strain PA7)</name>
    <dbReference type="NCBI Taxonomy" id="381754"/>
    <lineage>
        <taxon>Bacteria</taxon>
        <taxon>Pseudomonadati</taxon>
        <taxon>Pseudomonadota</taxon>
        <taxon>Gammaproteobacteria</taxon>
        <taxon>Pseudomonadales</taxon>
        <taxon>Pseudomonadaceae</taxon>
        <taxon>Pseudomonas</taxon>
        <taxon>Pseudomonas paraeruginosa</taxon>
    </lineage>
</organism>
<comment type="similarity">
    <text evidence="1">Belongs to the UPF0250 family.</text>
</comment>
<sequence>MTDTPDVQPPKIEFPCERYPIKVIGDAGEGFSDLVVEIIRRHAPDLDAETLVVRDSSKGRFLSVQVLITATDVDQLQAIHNDLRATGRVHMVL</sequence>
<protein>
    <recommendedName>
        <fullName evidence="1">UPF0250 protein PSPA7_1111</fullName>
    </recommendedName>
</protein>
<dbReference type="EMBL" id="CP000744">
    <property type="protein sequence ID" value="ABR85315.1"/>
    <property type="molecule type" value="Genomic_DNA"/>
</dbReference>
<dbReference type="RefSeq" id="WP_003153382.1">
    <property type="nucleotide sequence ID" value="NC_009656.1"/>
</dbReference>
<dbReference type="SMR" id="A6V0B2"/>
<dbReference type="GeneID" id="77219457"/>
<dbReference type="KEGG" id="pap:PSPA7_1111"/>
<dbReference type="HOGENOM" id="CLU_161438_1_0_6"/>
<dbReference type="Proteomes" id="UP000001582">
    <property type="component" value="Chromosome"/>
</dbReference>
<dbReference type="GO" id="GO:0005829">
    <property type="term" value="C:cytosol"/>
    <property type="evidence" value="ECO:0007669"/>
    <property type="project" value="TreeGrafter"/>
</dbReference>
<dbReference type="FunFam" id="3.30.70.260:FF:000079">
    <property type="entry name" value="UPF0250 protein NCTC10783_06313"/>
    <property type="match status" value="1"/>
</dbReference>
<dbReference type="Gene3D" id="3.30.70.260">
    <property type="match status" value="1"/>
</dbReference>
<dbReference type="HAMAP" id="MF_00659">
    <property type="entry name" value="UPF0250"/>
    <property type="match status" value="1"/>
</dbReference>
<dbReference type="InterPro" id="IPR007454">
    <property type="entry name" value="UPF0250_YbeD-like"/>
</dbReference>
<dbReference type="InterPro" id="IPR027471">
    <property type="entry name" value="YbeD-like_sf"/>
</dbReference>
<dbReference type="NCBIfam" id="NF001486">
    <property type="entry name" value="PRK00341.1"/>
    <property type="match status" value="1"/>
</dbReference>
<dbReference type="PANTHER" id="PTHR38036">
    <property type="entry name" value="UPF0250 PROTEIN YBED"/>
    <property type="match status" value="1"/>
</dbReference>
<dbReference type="PANTHER" id="PTHR38036:SF1">
    <property type="entry name" value="UPF0250 PROTEIN YBED"/>
    <property type="match status" value="1"/>
</dbReference>
<dbReference type="Pfam" id="PF04359">
    <property type="entry name" value="DUF493"/>
    <property type="match status" value="1"/>
</dbReference>
<dbReference type="SUPFAM" id="SSF117991">
    <property type="entry name" value="YbeD/HP0495-like"/>
    <property type="match status" value="1"/>
</dbReference>
<reference key="1">
    <citation type="submission" date="2007-06" db="EMBL/GenBank/DDBJ databases">
        <authorList>
            <person name="Dodson R.J."/>
            <person name="Harkins D."/>
            <person name="Paulsen I.T."/>
        </authorList>
    </citation>
    <scope>NUCLEOTIDE SEQUENCE [LARGE SCALE GENOMIC DNA]</scope>
    <source>
        <strain>DSM 24068 / PA7</strain>
    </source>
</reference>